<dbReference type="EC" id="4.2.3.5" evidence="1"/>
<dbReference type="EMBL" id="CP000230">
    <property type="protein sequence ID" value="ABC23420.1"/>
    <property type="molecule type" value="Genomic_DNA"/>
</dbReference>
<dbReference type="RefSeq" id="WP_011390373.1">
    <property type="nucleotide sequence ID" value="NC_007643.1"/>
</dbReference>
<dbReference type="RefSeq" id="YP_427707.1">
    <property type="nucleotide sequence ID" value="NC_007643.1"/>
</dbReference>
<dbReference type="SMR" id="Q2RR25"/>
<dbReference type="STRING" id="269796.Rru_A2623"/>
<dbReference type="EnsemblBacteria" id="ABC23420">
    <property type="protein sequence ID" value="ABC23420"/>
    <property type="gene ID" value="Rru_A2623"/>
</dbReference>
<dbReference type="KEGG" id="rru:Rru_A2623"/>
<dbReference type="PATRIC" id="fig|269796.9.peg.2733"/>
<dbReference type="eggNOG" id="COG0082">
    <property type="taxonomic scope" value="Bacteria"/>
</dbReference>
<dbReference type="HOGENOM" id="CLU_034547_0_2_5"/>
<dbReference type="PhylomeDB" id="Q2RR25"/>
<dbReference type="UniPathway" id="UPA00053">
    <property type="reaction ID" value="UER00090"/>
</dbReference>
<dbReference type="Proteomes" id="UP000001929">
    <property type="component" value="Chromosome"/>
</dbReference>
<dbReference type="GO" id="GO:0005829">
    <property type="term" value="C:cytosol"/>
    <property type="evidence" value="ECO:0007669"/>
    <property type="project" value="TreeGrafter"/>
</dbReference>
<dbReference type="GO" id="GO:0004107">
    <property type="term" value="F:chorismate synthase activity"/>
    <property type="evidence" value="ECO:0007669"/>
    <property type="project" value="UniProtKB-UniRule"/>
</dbReference>
<dbReference type="GO" id="GO:0010181">
    <property type="term" value="F:FMN binding"/>
    <property type="evidence" value="ECO:0007669"/>
    <property type="project" value="TreeGrafter"/>
</dbReference>
<dbReference type="GO" id="GO:0008652">
    <property type="term" value="P:amino acid biosynthetic process"/>
    <property type="evidence" value="ECO:0007669"/>
    <property type="project" value="UniProtKB-KW"/>
</dbReference>
<dbReference type="GO" id="GO:0009073">
    <property type="term" value="P:aromatic amino acid family biosynthetic process"/>
    <property type="evidence" value="ECO:0007669"/>
    <property type="project" value="UniProtKB-KW"/>
</dbReference>
<dbReference type="GO" id="GO:0009423">
    <property type="term" value="P:chorismate biosynthetic process"/>
    <property type="evidence" value="ECO:0007669"/>
    <property type="project" value="UniProtKB-UniRule"/>
</dbReference>
<dbReference type="CDD" id="cd07304">
    <property type="entry name" value="Chorismate_synthase"/>
    <property type="match status" value="1"/>
</dbReference>
<dbReference type="FunFam" id="3.60.150.10:FF:000002">
    <property type="entry name" value="Chorismate synthase"/>
    <property type="match status" value="1"/>
</dbReference>
<dbReference type="Gene3D" id="3.60.150.10">
    <property type="entry name" value="Chorismate synthase AroC"/>
    <property type="match status" value="1"/>
</dbReference>
<dbReference type="HAMAP" id="MF_00300">
    <property type="entry name" value="Chorismate_synth"/>
    <property type="match status" value="1"/>
</dbReference>
<dbReference type="InterPro" id="IPR000453">
    <property type="entry name" value="Chorismate_synth"/>
</dbReference>
<dbReference type="InterPro" id="IPR035904">
    <property type="entry name" value="Chorismate_synth_AroC_sf"/>
</dbReference>
<dbReference type="InterPro" id="IPR020541">
    <property type="entry name" value="Chorismate_synthase_CS"/>
</dbReference>
<dbReference type="NCBIfam" id="TIGR00033">
    <property type="entry name" value="aroC"/>
    <property type="match status" value="1"/>
</dbReference>
<dbReference type="NCBIfam" id="NF003793">
    <property type="entry name" value="PRK05382.1"/>
    <property type="match status" value="1"/>
</dbReference>
<dbReference type="PANTHER" id="PTHR21085">
    <property type="entry name" value="CHORISMATE SYNTHASE"/>
    <property type="match status" value="1"/>
</dbReference>
<dbReference type="PANTHER" id="PTHR21085:SF0">
    <property type="entry name" value="CHORISMATE SYNTHASE"/>
    <property type="match status" value="1"/>
</dbReference>
<dbReference type="Pfam" id="PF01264">
    <property type="entry name" value="Chorismate_synt"/>
    <property type="match status" value="1"/>
</dbReference>
<dbReference type="PIRSF" id="PIRSF001456">
    <property type="entry name" value="Chorismate_synth"/>
    <property type="match status" value="1"/>
</dbReference>
<dbReference type="SUPFAM" id="SSF103263">
    <property type="entry name" value="Chorismate synthase, AroC"/>
    <property type="match status" value="1"/>
</dbReference>
<dbReference type="PROSITE" id="PS00787">
    <property type="entry name" value="CHORISMATE_SYNTHASE_1"/>
    <property type="match status" value="1"/>
</dbReference>
<dbReference type="PROSITE" id="PS00788">
    <property type="entry name" value="CHORISMATE_SYNTHASE_2"/>
    <property type="match status" value="1"/>
</dbReference>
<dbReference type="PROSITE" id="PS00789">
    <property type="entry name" value="CHORISMATE_SYNTHASE_3"/>
    <property type="match status" value="1"/>
</dbReference>
<accession>Q2RR25</accession>
<proteinExistence type="inferred from homology"/>
<keyword id="KW-0028">Amino-acid biosynthesis</keyword>
<keyword id="KW-0057">Aromatic amino acid biosynthesis</keyword>
<keyword id="KW-0274">FAD</keyword>
<keyword id="KW-0285">Flavoprotein</keyword>
<keyword id="KW-0288">FMN</keyword>
<keyword id="KW-0456">Lyase</keyword>
<keyword id="KW-0521">NADP</keyword>
<keyword id="KW-1185">Reference proteome</keyword>
<name>AROC_RHORT</name>
<comment type="function">
    <text evidence="1">Catalyzes the anti-1,4-elimination of the C-3 phosphate and the C-6 proR hydrogen from 5-enolpyruvylshikimate-3-phosphate (EPSP) to yield chorismate, which is the branch point compound that serves as the starting substrate for the three terminal pathways of aromatic amino acid biosynthesis. This reaction introduces a second double bond into the aromatic ring system.</text>
</comment>
<comment type="catalytic activity">
    <reaction evidence="1">
        <text>5-O-(1-carboxyvinyl)-3-phosphoshikimate = chorismate + phosphate</text>
        <dbReference type="Rhea" id="RHEA:21020"/>
        <dbReference type="ChEBI" id="CHEBI:29748"/>
        <dbReference type="ChEBI" id="CHEBI:43474"/>
        <dbReference type="ChEBI" id="CHEBI:57701"/>
        <dbReference type="EC" id="4.2.3.5"/>
    </reaction>
</comment>
<comment type="cofactor">
    <cofactor evidence="1">
        <name>FMNH2</name>
        <dbReference type="ChEBI" id="CHEBI:57618"/>
    </cofactor>
    <text evidence="1">Reduced FMN (FMNH(2)).</text>
</comment>
<comment type="pathway">
    <text evidence="1">Metabolic intermediate biosynthesis; chorismate biosynthesis; chorismate from D-erythrose 4-phosphate and phosphoenolpyruvate: step 7/7.</text>
</comment>
<comment type="subunit">
    <text evidence="1">Homotetramer.</text>
</comment>
<comment type="similarity">
    <text evidence="1">Belongs to the chorismate synthase family.</text>
</comment>
<protein>
    <recommendedName>
        <fullName evidence="1">Chorismate synthase</fullName>
        <shortName evidence="1">CS</shortName>
        <ecNumber evidence="1">4.2.3.5</ecNumber>
    </recommendedName>
    <alternativeName>
        <fullName evidence="1">5-enolpyruvylshikimate-3-phosphate phospholyase</fullName>
    </alternativeName>
</protein>
<gene>
    <name evidence="1" type="primary">aroC</name>
    <name type="ordered locus">Rru_A2623</name>
</gene>
<organism>
    <name type="scientific">Rhodospirillum rubrum (strain ATCC 11170 / ATH 1.1.1 / DSM 467 / LMG 4362 / NCIMB 8255 / S1)</name>
    <dbReference type="NCBI Taxonomy" id="269796"/>
    <lineage>
        <taxon>Bacteria</taxon>
        <taxon>Pseudomonadati</taxon>
        <taxon>Pseudomonadota</taxon>
        <taxon>Alphaproteobacteria</taxon>
        <taxon>Rhodospirillales</taxon>
        <taxon>Rhodospirillaceae</taxon>
        <taxon>Rhodospirillum</taxon>
    </lineage>
</organism>
<evidence type="ECO:0000255" key="1">
    <source>
        <dbReference type="HAMAP-Rule" id="MF_00300"/>
    </source>
</evidence>
<sequence>MAGDSFGTLFRFTSFGESHGPAIGCVVEGVPPGIPLTAADLQHDLDRRKPGQSRFTTQRREDDAAEILSGVYEGVTTGTPIAVLIRNTDQRSKDYSDIAQRFRPGHADYTYWVKYGVRDPRGGGRSSARETAVRVAAGAIARKVLTSVLGRPLTIRAAVVEMGGLAIERANWDWLSVDANPFFSPDAAMVAPWEALLDGVRRDGSSVGAVVEVVAEGVPPGLGEPVYDRLDADLAKALMSINAVKGVEIGAGFEAARLRGESNADEMLPNGLGGVRFTSNNAGGVLGGISTGQTIIARLAVKPTSSIMIPRQSVDTQGRPVDVVTKGRHDPCVGIRAVPVAEAMVAVVLADHLLRFRGQCGLPVGL</sequence>
<feature type="chain" id="PRO_0000256327" description="Chorismate synthase">
    <location>
        <begin position="1"/>
        <end position="366"/>
    </location>
</feature>
<feature type="binding site" evidence="1">
    <location>
        <position position="48"/>
    </location>
    <ligand>
        <name>NADP(+)</name>
        <dbReference type="ChEBI" id="CHEBI:58349"/>
    </ligand>
</feature>
<feature type="binding site" evidence="1">
    <location>
        <position position="54"/>
    </location>
    <ligand>
        <name>NADP(+)</name>
        <dbReference type="ChEBI" id="CHEBI:58349"/>
    </ligand>
</feature>
<feature type="binding site" evidence="1">
    <location>
        <begin position="125"/>
        <end position="127"/>
    </location>
    <ligand>
        <name>FMN</name>
        <dbReference type="ChEBI" id="CHEBI:58210"/>
    </ligand>
</feature>
<feature type="binding site" evidence="1">
    <location>
        <begin position="242"/>
        <end position="243"/>
    </location>
    <ligand>
        <name>FMN</name>
        <dbReference type="ChEBI" id="CHEBI:58210"/>
    </ligand>
</feature>
<feature type="binding site" evidence="1">
    <location>
        <position position="287"/>
    </location>
    <ligand>
        <name>FMN</name>
        <dbReference type="ChEBI" id="CHEBI:58210"/>
    </ligand>
</feature>
<feature type="binding site" evidence="1">
    <location>
        <begin position="302"/>
        <end position="306"/>
    </location>
    <ligand>
        <name>FMN</name>
        <dbReference type="ChEBI" id="CHEBI:58210"/>
    </ligand>
</feature>
<feature type="binding site" evidence="1">
    <location>
        <position position="328"/>
    </location>
    <ligand>
        <name>FMN</name>
        <dbReference type="ChEBI" id="CHEBI:58210"/>
    </ligand>
</feature>
<reference key="1">
    <citation type="journal article" date="2011" name="Stand. Genomic Sci.">
        <title>Complete genome sequence of Rhodospirillum rubrum type strain (S1).</title>
        <authorList>
            <person name="Munk A.C."/>
            <person name="Copeland A."/>
            <person name="Lucas S."/>
            <person name="Lapidus A."/>
            <person name="Del Rio T.G."/>
            <person name="Barry K."/>
            <person name="Detter J.C."/>
            <person name="Hammon N."/>
            <person name="Israni S."/>
            <person name="Pitluck S."/>
            <person name="Brettin T."/>
            <person name="Bruce D."/>
            <person name="Han C."/>
            <person name="Tapia R."/>
            <person name="Gilna P."/>
            <person name="Schmutz J."/>
            <person name="Larimer F."/>
            <person name="Land M."/>
            <person name="Kyrpides N.C."/>
            <person name="Mavromatis K."/>
            <person name="Richardson P."/>
            <person name="Rohde M."/>
            <person name="Goeker M."/>
            <person name="Klenk H.P."/>
            <person name="Zhang Y."/>
            <person name="Roberts G.P."/>
            <person name="Reslewic S."/>
            <person name="Schwartz D.C."/>
        </authorList>
    </citation>
    <scope>NUCLEOTIDE SEQUENCE [LARGE SCALE GENOMIC DNA]</scope>
    <source>
        <strain>ATCC 11170 / ATH 1.1.1 / DSM 467 / LMG 4362 / NCIMB 8255 / S1</strain>
    </source>
</reference>